<reference key="1">
    <citation type="journal article" date="2008" name="Proc. Natl. Acad. Sci. U.S.A.">
        <title>Nitrogen fixation island and rhizosphere competence traits in the genome of root-associated Pseudomonas stutzeri A1501.</title>
        <authorList>
            <person name="Yan Y."/>
            <person name="Yang J."/>
            <person name="Dou Y."/>
            <person name="Chen M."/>
            <person name="Ping S."/>
            <person name="Peng J."/>
            <person name="Lu W."/>
            <person name="Zhang W."/>
            <person name="Yao Z."/>
            <person name="Li H."/>
            <person name="Liu W."/>
            <person name="He S."/>
            <person name="Geng L."/>
            <person name="Zhang X."/>
            <person name="Yang F."/>
            <person name="Yu H."/>
            <person name="Zhan Y."/>
            <person name="Li D."/>
            <person name="Lin Z."/>
            <person name="Wang Y."/>
            <person name="Elmerich C."/>
            <person name="Lin M."/>
            <person name="Jin Q."/>
        </authorList>
    </citation>
    <scope>NUCLEOTIDE SEQUENCE [LARGE SCALE GENOMIC DNA]</scope>
    <source>
        <strain>A1501</strain>
    </source>
</reference>
<feature type="chain" id="PRO_0000309112" description="Serine/threonine transporter SstT">
    <location>
        <begin position="1"/>
        <end position="412"/>
    </location>
</feature>
<feature type="transmembrane region" description="Helical" evidence="1">
    <location>
        <begin position="16"/>
        <end position="36"/>
    </location>
</feature>
<feature type="transmembrane region" description="Helical" evidence="1">
    <location>
        <begin position="44"/>
        <end position="64"/>
    </location>
</feature>
<feature type="transmembrane region" description="Helical" evidence="1">
    <location>
        <begin position="82"/>
        <end position="102"/>
    </location>
</feature>
<feature type="transmembrane region" description="Helical" evidence="1">
    <location>
        <begin position="115"/>
        <end position="135"/>
    </location>
</feature>
<feature type="transmembrane region" description="Helical" evidence="1">
    <location>
        <begin position="141"/>
        <end position="161"/>
    </location>
</feature>
<feature type="transmembrane region" description="Helical" evidence="1">
    <location>
        <begin position="179"/>
        <end position="199"/>
    </location>
</feature>
<feature type="transmembrane region" description="Helical" evidence="1">
    <location>
        <begin position="217"/>
        <end position="237"/>
    </location>
</feature>
<feature type="transmembrane region" description="Helical" evidence="1">
    <location>
        <begin position="298"/>
        <end position="318"/>
    </location>
</feature>
<feature type="transmembrane region" description="Helical" evidence="1">
    <location>
        <begin position="330"/>
        <end position="350"/>
    </location>
</feature>
<feature type="transmembrane region" description="Helical" evidence="1">
    <location>
        <begin position="357"/>
        <end position="377"/>
    </location>
</feature>
<sequence>MSDLPRIFRFINRTSLVAQIVVGLLAGALLALFLPGAAKSVALLGDLFVQALKAVAPVLVFVLVTSSLANHKRGQPTHIRPIIVLYALGTLSAAAVAVLASFLFPTSLTLVSEATDVIPPAGVGAVLNTLLFNIVDNPVRALLNGNFIGILAWAIGLGFAFRHAQDSTRRLIGDLSDGVTLIVKVVIRFAPLGVFGLVAGTLADSGFDVLLGYARLLLVLVGAMLFMALVMNPLIVFWQIRRNPYPLVFTCLRESGITAFFTRSSAANIPVNMQLCQRLGLHKDTYSVSIPLGATINMGGAAITITVLTLAAVNTLGIQVDVATAVLLSLLAAVCACGASGVAGGSLLLIPLACSLFGISNDLAMQVVAVGFIIGVVQDSAETALNSSTDVLFTAASCIAHGDIDEGAERRV</sequence>
<organism>
    <name type="scientific">Stutzerimonas stutzeri (strain A1501)</name>
    <name type="common">Pseudomonas stutzeri</name>
    <dbReference type="NCBI Taxonomy" id="379731"/>
    <lineage>
        <taxon>Bacteria</taxon>
        <taxon>Pseudomonadati</taxon>
        <taxon>Pseudomonadota</taxon>
        <taxon>Gammaproteobacteria</taxon>
        <taxon>Pseudomonadales</taxon>
        <taxon>Pseudomonadaceae</taxon>
        <taxon>Stutzerimonas</taxon>
    </lineage>
</organism>
<gene>
    <name evidence="1" type="primary">sstT</name>
    <name type="ordered locus">PST_1891</name>
</gene>
<proteinExistence type="inferred from homology"/>
<name>SSTT_STUS1</name>
<accession>A4VKR4</accession>
<evidence type="ECO:0000255" key="1">
    <source>
        <dbReference type="HAMAP-Rule" id="MF_01582"/>
    </source>
</evidence>
<comment type="function">
    <text evidence="1">Involved in the import of serine and threonine into the cell, with the concomitant import of sodium (symport system).</text>
</comment>
<comment type="catalytic activity">
    <reaction evidence="1">
        <text>L-serine(in) + Na(+)(in) = L-serine(out) + Na(+)(out)</text>
        <dbReference type="Rhea" id="RHEA:29575"/>
        <dbReference type="ChEBI" id="CHEBI:29101"/>
        <dbReference type="ChEBI" id="CHEBI:33384"/>
    </reaction>
    <physiologicalReaction direction="right-to-left" evidence="1">
        <dbReference type="Rhea" id="RHEA:29577"/>
    </physiologicalReaction>
</comment>
<comment type="catalytic activity">
    <reaction evidence="1">
        <text>L-threonine(in) + Na(+)(in) = L-threonine(out) + Na(+)(out)</text>
        <dbReference type="Rhea" id="RHEA:69999"/>
        <dbReference type="ChEBI" id="CHEBI:29101"/>
        <dbReference type="ChEBI" id="CHEBI:57926"/>
    </reaction>
    <physiologicalReaction direction="right-to-left" evidence="1">
        <dbReference type="Rhea" id="RHEA:70001"/>
    </physiologicalReaction>
</comment>
<comment type="subcellular location">
    <subcellularLocation>
        <location evidence="1">Cell inner membrane</location>
        <topology evidence="1">Multi-pass membrane protein</topology>
    </subcellularLocation>
</comment>
<comment type="similarity">
    <text evidence="1">Belongs to the dicarboxylate/amino acid:cation symporter (DAACS) (TC 2.A.23) family.</text>
</comment>
<dbReference type="EMBL" id="CP000304">
    <property type="protein sequence ID" value="ABP79565.1"/>
    <property type="molecule type" value="Genomic_DNA"/>
</dbReference>
<dbReference type="RefSeq" id="WP_011913035.1">
    <property type="nucleotide sequence ID" value="NC_009434.1"/>
</dbReference>
<dbReference type="SMR" id="A4VKR4"/>
<dbReference type="KEGG" id="psa:PST_1891"/>
<dbReference type="eggNOG" id="COG3633">
    <property type="taxonomic scope" value="Bacteria"/>
</dbReference>
<dbReference type="HOGENOM" id="CLU_044581_0_0_6"/>
<dbReference type="Proteomes" id="UP000000233">
    <property type="component" value="Chromosome"/>
</dbReference>
<dbReference type="GO" id="GO:0005886">
    <property type="term" value="C:plasma membrane"/>
    <property type="evidence" value="ECO:0007669"/>
    <property type="project" value="UniProtKB-SubCell"/>
</dbReference>
<dbReference type="GO" id="GO:0005295">
    <property type="term" value="F:neutral L-amino acid:sodium symporter activity"/>
    <property type="evidence" value="ECO:0007669"/>
    <property type="project" value="TreeGrafter"/>
</dbReference>
<dbReference type="GO" id="GO:0032329">
    <property type="term" value="P:serine transport"/>
    <property type="evidence" value="ECO:0007669"/>
    <property type="project" value="InterPro"/>
</dbReference>
<dbReference type="GO" id="GO:0015826">
    <property type="term" value="P:threonine transport"/>
    <property type="evidence" value="ECO:0007669"/>
    <property type="project" value="InterPro"/>
</dbReference>
<dbReference type="FunFam" id="1.10.3860.10:FF:000003">
    <property type="entry name" value="Serine/threonine transporter sstT"/>
    <property type="match status" value="1"/>
</dbReference>
<dbReference type="Gene3D" id="1.10.3860.10">
    <property type="entry name" value="Sodium:dicarboxylate symporter"/>
    <property type="match status" value="1"/>
</dbReference>
<dbReference type="HAMAP" id="MF_01582">
    <property type="entry name" value="Ser_Thr_transp_SstT"/>
    <property type="match status" value="1"/>
</dbReference>
<dbReference type="InterPro" id="IPR001991">
    <property type="entry name" value="Na-dicarboxylate_symporter"/>
</dbReference>
<dbReference type="InterPro" id="IPR036458">
    <property type="entry name" value="Na:dicarbo_symporter_sf"/>
</dbReference>
<dbReference type="InterPro" id="IPR023025">
    <property type="entry name" value="Ser_Thr_transp_SstT"/>
</dbReference>
<dbReference type="NCBIfam" id="NF010151">
    <property type="entry name" value="PRK13628.1"/>
    <property type="match status" value="1"/>
</dbReference>
<dbReference type="PANTHER" id="PTHR42865">
    <property type="entry name" value="PROTON/GLUTAMATE-ASPARTATE SYMPORTER"/>
    <property type="match status" value="1"/>
</dbReference>
<dbReference type="PANTHER" id="PTHR42865:SF8">
    <property type="entry name" value="SERINE_THREONINE TRANSPORTER SSTT"/>
    <property type="match status" value="1"/>
</dbReference>
<dbReference type="Pfam" id="PF00375">
    <property type="entry name" value="SDF"/>
    <property type="match status" value="1"/>
</dbReference>
<dbReference type="PRINTS" id="PR00173">
    <property type="entry name" value="EDTRNSPORT"/>
</dbReference>
<dbReference type="SUPFAM" id="SSF118215">
    <property type="entry name" value="Proton glutamate symport protein"/>
    <property type="match status" value="1"/>
</dbReference>
<protein>
    <recommendedName>
        <fullName evidence="1">Serine/threonine transporter SstT</fullName>
    </recommendedName>
    <alternativeName>
        <fullName evidence="1">Na(+)/serine-threonine symporter</fullName>
    </alternativeName>
</protein>
<keyword id="KW-0029">Amino-acid transport</keyword>
<keyword id="KW-0997">Cell inner membrane</keyword>
<keyword id="KW-1003">Cell membrane</keyword>
<keyword id="KW-0472">Membrane</keyword>
<keyword id="KW-1185">Reference proteome</keyword>
<keyword id="KW-0769">Symport</keyword>
<keyword id="KW-0812">Transmembrane</keyword>
<keyword id="KW-1133">Transmembrane helix</keyword>
<keyword id="KW-0813">Transport</keyword>